<proteinExistence type="evidence at protein level"/>
<comment type="function">
    <text evidence="3">Anti-apoptotic protein that modulates a caspase-10 dependent mitochondrial caspase-3/9 feedback amplification loop.</text>
</comment>
<comment type="alternative products">
    <event type="alternative splicing"/>
    <isoform>
        <id>Q9H8G2-1</id>
        <name>1</name>
        <sequence type="displayed"/>
    </isoform>
    <isoform>
        <id>Q9H8G2-2</id>
        <name>2</name>
        <sequence type="described" ref="VSP_044253"/>
    </isoform>
</comment>
<comment type="tissue specificity">
    <text evidence="3">Ubiquitous.</text>
</comment>
<gene>
    <name type="primary">CAAP1</name>
    <name type="synonym">C9orf82</name>
    <name type="synonym">CAAP</name>
</gene>
<sequence>MTGKKSSREKRRKRSSQEAAAALAAPDIVPALASGSSGSTSGCGSAGGCGSVSCCGNANFSGSVTGGGSGGSCWGGSSVERSERRKRRSTDSSSVSGSLQQETKYILPTLEKELFLAEHSDLEEGGLDLTVSLKPVSFYISDKKEMLQQCFCIIGEKKLQKMLPDVLKNCSIEEIKKLCQEQLELLSEKKILKILEGDNGMDSDMEEEADDGSKMGSDLVSQQDICIDSASSVRENKQPEGLELKQGKGEDSDVLSINADAYDSDIEGPCNEEAAAPEAPENTVQSEAGQIDDLEKDIEKSVNEILGLAESSPNEPKAATLAVPPPEDVQPSAQQLELLELEMRARAIKALMKAGDIKKPA</sequence>
<keyword id="KW-0025">Alternative splicing</keyword>
<keyword id="KW-0053">Apoptosis</keyword>
<keyword id="KW-0175">Coiled coil</keyword>
<keyword id="KW-1017">Isopeptide bond</keyword>
<keyword id="KW-0597">Phosphoprotein</keyword>
<keyword id="KW-1267">Proteomics identification</keyword>
<keyword id="KW-1185">Reference proteome</keyword>
<keyword id="KW-0832">Ubl conjugation</keyword>
<protein>
    <recommendedName>
        <fullName>Caspase activity and apoptosis inhibitor 1</fullName>
    </recommendedName>
    <alternativeName>
        <fullName>Conserved anti-apoptotic protein</fullName>
        <shortName>CAAP</shortName>
    </alternativeName>
</protein>
<feature type="chain" id="PRO_0000089717" description="Caspase activity and apoptosis inhibitor 1">
    <location>
        <begin position="1"/>
        <end position="361"/>
    </location>
</feature>
<feature type="region of interest" description="Disordered" evidence="2">
    <location>
        <begin position="1"/>
        <end position="28"/>
    </location>
</feature>
<feature type="region of interest" description="Disordered" evidence="2">
    <location>
        <begin position="67"/>
        <end position="100"/>
    </location>
</feature>
<feature type="region of interest" description="Disordered" evidence="2">
    <location>
        <begin position="198"/>
        <end position="218"/>
    </location>
</feature>
<feature type="region of interest" description="Disordered" evidence="2">
    <location>
        <begin position="230"/>
        <end position="331"/>
    </location>
</feature>
<feature type="coiled-coil region" evidence="1">
    <location>
        <begin position="281"/>
        <end position="311"/>
    </location>
</feature>
<feature type="compositionally biased region" description="Basic residues" evidence="2">
    <location>
        <begin position="1"/>
        <end position="14"/>
    </location>
</feature>
<feature type="compositionally biased region" description="Low complexity" evidence="2">
    <location>
        <begin position="19"/>
        <end position="28"/>
    </location>
</feature>
<feature type="compositionally biased region" description="Acidic residues" evidence="2">
    <location>
        <begin position="199"/>
        <end position="210"/>
    </location>
</feature>
<feature type="compositionally biased region" description="Basic and acidic residues" evidence="2">
    <location>
        <begin position="234"/>
        <end position="251"/>
    </location>
</feature>
<feature type="compositionally biased region" description="Low complexity" evidence="2">
    <location>
        <begin position="272"/>
        <end position="281"/>
    </location>
</feature>
<feature type="modified residue" description="Phosphoserine" evidence="12">
    <location>
        <position position="89"/>
    </location>
</feature>
<feature type="modified residue" description="Phosphothreonine" evidence="12">
    <location>
        <position position="90"/>
    </location>
</feature>
<feature type="modified residue" description="Phosphoserine" evidence="13">
    <location>
        <position position="120"/>
    </location>
</feature>
<feature type="modified residue" description="Phosphoserine" evidence="6 7 8 9 10 11 12 13">
    <location>
        <position position="203"/>
    </location>
</feature>
<feature type="modified residue" description="Phosphoserine" evidence="8 9 10 11 12 13">
    <location>
        <position position="312"/>
    </location>
</feature>
<feature type="cross-link" description="Glycyl lysine isopeptide (Lys-Gly) (interchain with G-Cter in SUMO2)" evidence="14">
    <location>
        <position position="104"/>
    </location>
</feature>
<feature type="splice variant" id="VSP_044253" description="In isoform 2." evidence="4">
    <location>
        <begin position="1"/>
        <end position="145"/>
    </location>
</feature>
<feature type="sequence variant" id="VAR_056818" description="In dbSNP:rs12342214.">
    <original>V</original>
    <variation>M</variation>
    <location>
        <position position="233"/>
    </location>
</feature>
<feature type="sequence conflict" description="In Ref. 1; BAB14655." evidence="5" ref="1">
    <original>S</original>
    <variation>G</variation>
    <location>
        <position position="34"/>
    </location>
</feature>
<feature type="sequence conflict" description="In Ref. 4; AAH14658." evidence="5" ref="4">
    <original>E</original>
    <variation>K</variation>
    <location>
        <position position="188"/>
    </location>
</feature>
<feature type="sequence conflict" description="In Ref. 4; AAH71953." evidence="5" ref="4">
    <original>D</original>
    <variation>N</variation>
    <location>
        <position position="292"/>
    </location>
</feature>
<evidence type="ECO:0000255" key="1"/>
<evidence type="ECO:0000256" key="2">
    <source>
        <dbReference type="SAM" id="MobiDB-lite"/>
    </source>
</evidence>
<evidence type="ECO:0000269" key="3">
    <source>
    </source>
</evidence>
<evidence type="ECO:0000303" key="4">
    <source>
    </source>
</evidence>
<evidence type="ECO:0000305" key="5"/>
<evidence type="ECO:0007744" key="6">
    <source>
    </source>
</evidence>
<evidence type="ECO:0007744" key="7">
    <source>
    </source>
</evidence>
<evidence type="ECO:0007744" key="8">
    <source>
    </source>
</evidence>
<evidence type="ECO:0007744" key="9">
    <source>
    </source>
</evidence>
<evidence type="ECO:0007744" key="10">
    <source>
    </source>
</evidence>
<evidence type="ECO:0007744" key="11">
    <source>
    </source>
</evidence>
<evidence type="ECO:0007744" key="12">
    <source>
    </source>
</evidence>
<evidence type="ECO:0007744" key="13">
    <source>
    </source>
</evidence>
<evidence type="ECO:0007744" key="14">
    <source>
    </source>
</evidence>
<accession>Q9H8G2</accession>
<accession>B4DWT4</accession>
<accession>D3DRK4</accession>
<accession>Q5VY32</accession>
<accession>Q6IPE6</accession>
<accession>Q96C59</accession>
<organism>
    <name type="scientific">Homo sapiens</name>
    <name type="common">Human</name>
    <dbReference type="NCBI Taxonomy" id="9606"/>
    <lineage>
        <taxon>Eukaryota</taxon>
        <taxon>Metazoa</taxon>
        <taxon>Chordata</taxon>
        <taxon>Craniata</taxon>
        <taxon>Vertebrata</taxon>
        <taxon>Euteleostomi</taxon>
        <taxon>Mammalia</taxon>
        <taxon>Eutheria</taxon>
        <taxon>Euarchontoglires</taxon>
        <taxon>Primates</taxon>
        <taxon>Haplorrhini</taxon>
        <taxon>Catarrhini</taxon>
        <taxon>Hominidae</taxon>
        <taxon>Homo</taxon>
    </lineage>
</organism>
<name>CAAP1_HUMAN</name>
<dbReference type="EMBL" id="AK023719">
    <property type="protein sequence ID" value="BAB14655.1"/>
    <property type="molecule type" value="mRNA"/>
</dbReference>
<dbReference type="EMBL" id="AK301673">
    <property type="protein sequence ID" value="BAG63146.1"/>
    <property type="molecule type" value="mRNA"/>
</dbReference>
<dbReference type="EMBL" id="AL356133">
    <property type="status" value="NOT_ANNOTATED_CDS"/>
    <property type="molecule type" value="Genomic_DNA"/>
</dbReference>
<dbReference type="EMBL" id="CH471071">
    <property type="protein sequence ID" value="EAW58576.1"/>
    <property type="molecule type" value="Genomic_DNA"/>
</dbReference>
<dbReference type="EMBL" id="CH471071">
    <property type="protein sequence ID" value="EAW58577.1"/>
    <property type="molecule type" value="Genomic_DNA"/>
</dbReference>
<dbReference type="EMBL" id="BC014658">
    <property type="protein sequence ID" value="AAH14658.1"/>
    <property type="molecule type" value="mRNA"/>
</dbReference>
<dbReference type="EMBL" id="BC071953">
    <property type="protein sequence ID" value="AAH71953.1"/>
    <property type="molecule type" value="mRNA"/>
</dbReference>
<dbReference type="CCDS" id="CCDS55299.1">
    <molecule id="Q9H8G2-2"/>
</dbReference>
<dbReference type="CCDS" id="CCDS6516.1">
    <molecule id="Q9H8G2-1"/>
</dbReference>
<dbReference type="RefSeq" id="NP_001161047.1">
    <molecule id="Q9H8G2-2"/>
    <property type="nucleotide sequence ID" value="NM_001167575.2"/>
</dbReference>
<dbReference type="RefSeq" id="NP_079104.3">
    <molecule id="Q9H8G2-1"/>
    <property type="nucleotide sequence ID" value="NM_024828.3"/>
</dbReference>
<dbReference type="BioGRID" id="122971">
    <property type="interactions" value="50"/>
</dbReference>
<dbReference type="FunCoup" id="Q9H8G2">
    <property type="interactions" value="1230"/>
</dbReference>
<dbReference type="IntAct" id="Q9H8G2">
    <property type="interactions" value="22"/>
</dbReference>
<dbReference type="MINT" id="Q9H8G2"/>
<dbReference type="STRING" id="9606.ENSP00000369431"/>
<dbReference type="GlyGen" id="Q9H8G2">
    <property type="glycosylation" value="1 site, 1 O-linked glycan (1 site)"/>
</dbReference>
<dbReference type="iPTMnet" id="Q9H8G2"/>
<dbReference type="PhosphoSitePlus" id="Q9H8G2"/>
<dbReference type="SwissPalm" id="Q9H8G2"/>
<dbReference type="BioMuta" id="CAAP1"/>
<dbReference type="DMDM" id="68565300"/>
<dbReference type="jPOST" id="Q9H8G2"/>
<dbReference type="MassIVE" id="Q9H8G2"/>
<dbReference type="PaxDb" id="9606-ENSP00000369431"/>
<dbReference type="PeptideAtlas" id="Q9H8G2"/>
<dbReference type="ProteomicsDB" id="5380"/>
<dbReference type="ProteomicsDB" id="81206">
    <molecule id="Q9H8G2-1"/>
</dbReference>
<dbReference type="Pumba" id="Q9H8G2"/>
<dbReference type="Antibodypedia" id="10518">
    <property type="antibodies" value="26 antibodies from 8 providers"/>
</dbReference>
<dbReference type="DNASU" id="79886"/>
<dbReference type="Ensembl" id="ENST00000333916.8">
    <molecule id="Q9H8G2-1"/>
    <property type="protein sequence ID" value="ENSP00000369431.3"/>
    <property type="gene ID" value="ENSG00000120159.13"/>
</dbReference>
<dbReference type="Ensembl" id="ENST00000625311.1">
    <molecule id="Q9H8G2-2"/>
    <property type="protein sequence ID" value="ENSP00000487373.1"/>
    <property type="gene ID" value="ENSG00000120159.13"/>
</dbReference>
<dbReference type="GeneID" id="79886"/>
<dbReference type="KEGG" id="hsa:79886"/>
<dbReference type="MANE-Select" id="ENST00000333916.8">
    <property type="protein sequence ID" value="ENSP00000369431.3"/>
    <property type="RefSeq nucleotide sequence ID" value="NM_024828.4"/>
    <property type="RefSeq protein sequence ID" value="NP_079104.3"/>
</dbReference>
<dbReference type="UCSC" id="uc003zqc.4">
    <molecule id="Q9H8G2-1"/>
    <property type="organism name" value="human"/>
</dbReference>
<dbReference type="AGR" id="HGNC:25834"/>
<dbReference type="CTD" id="79886"/>
<dbReference type="DisGeNET" id="79886"/>
<dbReference type="GeneCards" id="CAAP1"/>
<dbReference type="HGNC" id="HGNC:25834">
    <property type="gene designation" value="CAAP1"/>
</dbReference>
<dbReference type="HPA" id="ENSG00000120159">
    <property type="expression patterns" value="Low tissue specificity"/>
</dbReference>
<dbReference type="neXtProt" id="NX_Q9H8G2"/>
<dbReference type="OpenTargets" id="ENSG00000120159"/>
<dbReference type="PharmGKB" id="PA134943744"/>
<dbReference type="VEuPathDB" id="HostDB:ENSG00000120159"/>
<dbReference type="eggNOG" id="ENOG502RN9N">
    <property type="taxonomic scope" value="Eukaryota"/>
</dbReference>
<dbReference type="GeneTree" id="ENSGT00390000017010"/>
<dbReference type="HOGENOM" id="CLU_078683_0_0_1"/>
<dbReference type="InParanoid" id="Q9H8G2"/>
<dbReference type="OMA" id="QVPEKKD"/>
<dbReference type="OrthoDB" id="10064012at2759"/>
<dbReference type="PAN-GO" id="Q9H8G2">
    <property type="GO annotations" value="1 GO annotation based on evolutionary models"/>
</dbReference>
<dbReference type="PhylomeDB" id="Q9H8G2"/>
<dbReference type="TreeFam" id="TF332850"/>
<dbReference type="PathwayCommons" id="Q9H8G2"/>
<dbReference type="SignaLink" id="Q9H8G2"/>
<dbReference type="BioGRID-ORCS" id="79886">
    <property type="hits" value="26 hits in 1155 CRISPR screens"/>
</dbReference>
<dbReference type="ChiTaRS" id="CAAP1">
    <property type="organism name" value="human"/>
</dbReference>
<dbReference type="GeneWiki" id="C9orf82"/>
<dbReference type="GenomeRNAi" id="79886"/>
<dbReference type="Pharos" id="Q9H8G2">
    <property type="development level" value="Tbio"/>
</dbReference>
<dbReference type="PRO" id="PR:Q9H8G2"/>
<dbReference type="Proteomes" id="UP000005640">
    <property type="component" value="Chromosome 9"/>
</dbReference>
<dbReference type="RNAct" id="Q9H8G2">
    <property type="molecule type" value="protein"/>
</dbReference>
<dbReference type="Bgee" id="ENSG00000120159">
    <property type="expression patterns" value="Expressed in mucosa of sigmoid colon and 210 other cell types or tissues"/>
</dbReference>
<dbReference type="ExpressionAtlas" id="Q9H8G2">
    <property type="expression patterns" value="baseline and differential"/>
</dbReference>
<dbReference type="GO" id="GO:0006915">
    <property type="term" value="P:apoptotic process"/>
    <property type="evidence" value="ECO:0007669"/>
    <property type="project" value="UniProtKB-KW"/>
</dbReference>
<dbReference type="GO" id="GO:0043066">
    <property type="term" value="P:negative regulation of apoptotic process"/>
    <property type="evidence" value="ECO:0000315"/>
    <property type="project" value="UniProtKB"/>
</dbReference>
<dbReference type="InterPro" id="IPR038991">
    <property type="entry name" value="CAAP1"/>
</dbReference>
<dbReference type="PANTHER" id="PTHR14740">
    <property type="entry name" value="CASPASE ACTIVITY AND APOPTOSIS INHIBITOR 1"/>
    <property type="match status" value="1"/>
</dbReference>
<dbReference type="PANTHER" id="PTHR14740:SF3">
    <property type="entry name" value="CASPASE ACTIVITY AND APOPTOSIS INHIBITOR 1"/>
    <property type="match status" value="1"/>
</dbReference>
<dbReference type="Pfam" id="PF15335">
    <property type="entry name" value="CAAP1"/>
    <property type="match status" value="1"/>
</dbReference>
<reference key="1">
    <citation type="journal article" date="2004" name="Nat. Genet.">
        <title>Complete sequencing and characterization of 21,243 full-length human cDNAs.</title>
        <authorList>
            <person name="Ota T."/>
            <person name="Suzuki Y."/>
            <person name="Nishikawa T."/>
            <person name="Otsuki T."/>
            <person name="Sugiyama T."/>
            <person name="Irie R."/>
            <person name="Wakamatsu A."/>
            <person name="Hayashi K."/>
            <person name="Sato H."/>
            <person name="Nagai K."/>
            <person name="Kimura K."/>
            <person name="Makita H."/>
            <person name="Sekine M."/>
            <person name="Obayashi M."/>
            <person name="Nishi T."/>
            <person name="Shibahara T."/>
            <person name="Tanaka T."/>
            <person name="Ishii S."/>
            <person name="Yamamoto J."/>
            <person name="Saito K."/>
            <person name="Kawai Y."/>
            <person name="Isono Y."/>
            <person name="Nakamura Y."/>
            <person name="Nagahari K."/>
            <person name="Murakami K."/>
            <person name="Yasuda T."/>
            <person name="Iwayanagi T."/>
            <person name="Wagatsuma M."/>
            <person name="Shiratori A."/>
            <person name="Sudo H."/>
            <person name="Hosoiri T."/>
            <person name="Kaku Y."/>
            <person name="Kodaira H."/>
            <person name="Kondo H."/>
            <person name="Sugawara M."/>
            <person name="Takahashi M."/>
            <person name="Kanda K."/>
            <person name="Yokoi T."/>
            <person name="Furuya T."/>
            <person name="Kikkawa E."/>
            <person name="Omura Y."/>
            <person name="Abe K."/>
            <person name="Kamihara K."/>
            <person name="Katsuta N."/>
            <person name="Sato K."/>
            <person name="Tanikawa M."/>
            <person name="Yamazaki M."/>
            <person name="Ninomiya K."/>
            <person name="Ishibashi T."/>
            <person name="Yamashita H."/>
            <person name="Murakawa K."/>
            <person name="Fujimori K."/>
            <person name="Tanai H."/>
            <person name="Kimata M."/>
            <person name="Watanabe M."/>
            <person name="Hiraoka S."/>
            <person name="Chiba Y."/>
            <person name="Ishida S."/>
            <person name="Ono Y."/>
            <person name="Takiguchi S."/>
            <person name="Watanabe S."/>
            <person name="Yosida M."/>
            <person name="Hotuta T."/>
            <person name="Kusano J."/>
            <person name="Kanehori K."/>
            <person name="Takahashi-Fujii A."/>
            <person name="Hara H."/>
            <person name="Tanase T.-O."/>
            <person name="Nomura Y."/>
            <person name="Togiya S."/>
            <person name="Komai F."/>
            <person name="Hara R."/>
            <person name="Takeuchi K."/>
            <person name="Arita M."/>
            <person name="Imose N."/>
            <person name="Musashino K."/>
            <person name="Yuuki H."/>
            <person name="Oshima A."/>
            <person name="Sasaki N."/>
            <person name="Aotsuka S."/>
            <person name="Yoshikawa Y."/>
            <person name="Matsunawa H."/>
            <person name="Ichihara T."/>
            <person name="Shiohata N."/>
            <person name="Sano S."/>
            <person name="Moriya S."/>
            <person name="Momiyama H."/>
            <person name="Satoh N."/>
            <person name="Takami S."/>
            <person name="Terashima Y."/>
            <person name="Suzuki O."/>
            <person name="Nakagawa S."/>
            <person name="Senoh A."/>
            <person name="Mizoguchi H."/>
            <person name="Goto Y."/>
            <person name="Shimizu F."/>
            <person name="Wakebe H."/>
            <person name="Hishigaki H."/>
            <person name="Watanabe T."/>
            <person name="Sugiyama A."/>
            <person name="Takemoto M."/>
            <person name="Kawakami B."/>
            <person name="Yamazaki M."/>
            <person name="Watanabe K."/>
            <person name="Kumagai A."/>
            <person name="Itakura S."/>
            <person name="Fukuzumi Y."/>
            <person name="Fujimori Y."/>
            <person name="Komiyama M."/>
            <person name="Tashiro H."/>
            <person name="Tanigami A."/>
            <person name="Fujiwara T."/>
            <person name="Ono T."/>
            <person name="Yamada K."/>
            <person name="Fujii Y."/>
            <person name="Ozaki K."/>
            <person name="Hirao M."/>
            <person name="Ohmori Y."/>
            <person name="Kawabata A."/>
            <person name="Hikiji T."/>
            <person name="Kobatake N."/>
            <person name="Inagaki H."/>
            <person name="Ikema Y."/>
            <person name="Okamoto S."/>
            <person name="Okitani R."/>
            <person name="Kawakami T."/>
            <person name="Noguchi S."/>
            <person name="Itoh T."/>
            <person name="Shigeta K."/>
            <person name="Senba T."/>
            <person name="Matsumura K."/>
            <person name="Nakajima Y."/>
            <person name="Mizuno T."/>
            <person name="Morinaga M."/>
            <person name="Sasaki M."/>
            <person name="Togashi T."/>
            <person name="Oyama M."/>
            <person name="Hata H."/>
            <person name="Watanabe M."/>
            <person name="Komatsu T."/>
            <person name="Mizushima-Sugano J."/>
            <person name="Satoh T."/>
            <person name="Shirai Y."/>
            <person name="Takahashi Y."/>
            <person name="Nakagawa K."/>
            <person name="Okumura K."/>
            <person name="Nagase T."/>
            <person name="Nomura N."/>
            <person name="Kikuchi H."/>
            <person name="Masuho Y."/>
            <person name="Yamashita R."/>
            <person name="Nakai K."/>
            <person name="Yada T."/>
            <person name="Nakamura Y."/>
            <person name="Ohara O."/>
            <person name="Isogai T."/>
            <person name="Sugano S."/>
        </authorList>
    </citation>
    <scope>NUCLEOTIDE SEQUENCE [LARGE SCALE MRNA] (ISOFORMS 1 AND 2)</scope>
    <source>
        <tissue>Esophagus</tissue>
        <tissue>Placenta</tissue>
    </source>
</reference>
<reference key="2">
    <citation type="journal article" date="2004" name="Nature">
        <title>DNA sequence and analysis of human chromosome 9.</title>
        <authorList>
            <person name="Humphray S.J."/>
            <person name="Oliver K."/>
            <person name="Hunt A.R."/>
            <person name="Plumb R.W."/>
            <person name="Loveland J.E."/>
            <person name="Howe K.L."/>
            <person name="Andrews T.D."/>
            <person name="Searle S."/>
            <person name="Hunt S.E."/>
            <person name="Scott C.E."/>
            <person name="Jones M.C."/>
            <person name="Ainscough R."/>
            <person name="Almeida J.P."/>
            <person name="Ambrose K.D."/>
            <person name="Ashwell R.I.S."/>
            <person name="Babbage A.K."/>
            <person name="Babbage S."/>
            <person name="Bagguley C.L."/>
            <person name="Bailey J."/>
            <person name="Banerjee R."/>
            <person name="Barker D.J."/>
            <person name="Barlow K.F."/>
            <person name="Bates K."/>
            <person name="Beasley H."/>
            <person name="Beasley O."/>
            <person name="Bird C.P."/>
            <person name="Bray-Allen S."/>
            <person name="Brown A.J."/>
            <person name="Brown J.Y."/>
            <person name="Burford D."/>
            <person name="Burrill W."/>
            <person name="Burton J."/>
            <person name="Carder C."/>
            <person name="Carter N.P."/>
            <person name="Chapman J.C."/>
            <person name="Chen Y."/>
            <person name="Clarke G."/>
            <person name="Clark S.Y."/>
            <person name="Clee C.M."/>
            <person name="Clegg S."/>
            <person name="Collier R.E."/>
            <person name="Corby N."/>
            <person name="Crosier M."/>
            <person name="Cummings A.T."/>
            <person name="Davies J."/>
            <person name="Dhami P."/>
            <person name="Dunn M."/>
            <person name="Dutta I."/>
            <person name="Dyer L.W."/>
            <person name="Earthrowl M.E."/>
            <person name="Faulkner L."/>
            <person name="Fleming C.J."/>
            <person name="Frankish A."/>
            <person name="Frankland J.A."/>
            <person name="French L."/>
            <person name="Fricker D.G."/>
            <person name="Garner P."/>
            <person name="Garnett J."/>
            <person name="Ghori J."/>
            <person name="Gilbert J.G.R."/>
            <person name="Glison C."/>
            <person name="Grafham D.V."/>
            <person name="Gribble S."/>
            <person name="Griffiths C."/>
            <person name="Griffiths-Jones S."/>
            <person name="Grocock R."/>
            <person name="Guy J."/>
            <person name="Hall R.E."/>
            <person name="Hammond S."/>
            <person name="Harley J.L."/>
            <person name="Harrison E.S.I."/>
            <person name="Hart E.A."/>
            <person name="Heath P.D."/>
            <person name="Henderson C.D."/>
            <person name="Hopkins B.L."/>
            <person name="Howard P.J."/>
            <person name="Howden P.J."/>
            <person name="Huckle E."/>
            <person name="Johnson C."/>
            <person name="Johnson D."/>
            <person name="Joy A.A."/>
            <person name="Kay M."/>
            <person name="Keenan S."/>
            <person name="Kershaw J.K."/>
            <person name="Kimberley A.M."/>
            <person name="King A."/>
            <person name="Knights A."/>
            <person name="Laird G.K."/>
            <person name="Langford C."/>
            <person name="Lawlor S."/>
            <person name="Leongamornlert D.A."/>
            <person name="Leversha M."/>
            <person name="Lloyd C."/>
            <person name="Lloyd D.M."/>
            <person name="Lovell J."/>
            <person name="Martin S."/>
            <person name="Mashreghi-Mohammadi M."/>
            <person name="Matthews L."/>
            <person name="McLaren S."/>
            <person name="McLay K.E."/>
            <person name="McMurray A."/>
            <person name="Milne S."/>
            <person name="Nickerson T."/>
            <person name="Nisbett J."/>
            <person name="Nordsiek G."/>
            <person name="Pearce A.V."/>
            <person name="Peck A.I."/>
            <person name="Porter K.M."/>
            <person name="Pandian R."/>
            <person name="Pelan S."/>
            <person name="Phillimore B."/>
            <person name="Povey S."/>
            <person name="Ramsey Y."/>
            <person name="Rand V."/>
            <person name="Scharfe M."/>
            <person name="Sehra H.K."/>
            <person name="Shownkeen R."/>
            <person name="Sims S.K."/>
            <person name="Skuce C.D."/>
            <person name="Smith M."/>
            <person name="Steward C.A."/>
            <person name="Swarbreck D."/>
            <person name="Sycamore N."/>
            <person name="Tester J."/>
            <person name="Thorpe A."/>
            <person name="Tracey A."/>
            <person name="Tromans A."/>
            <person name="Thomas D.W."/>
            <person name="Wall M."/>
            <person name="Wallis J.M."/>
            <person name="West A.P."/>
            <person name="Whitehead S.L."/>
            <person name="Willey D.L."/>
            <person name="Williams S.A."/>
            <person name="Wilming L."/>
            <person name="Wray P.W."/>
            <person name="Young L."/>
            <person name="Ashurst J.L."/>
            <person name="Coulson A."/>
            <person name="Blocker H."/>
            <person name="Durbin R.M."/>
            <person name="Sulston J.E."/>
            <person name="Hubbard T."/>
            <person name="Jackson M.J."/>
            <person name="Bentley D.R."/>
            <person name="Beck S."/>
            <person name="Rogers J."/>
            <person name="Dunham I."/>
        </authorList>
    </citation>
    <scope>NUCLEOTIDE SEQUENCE [LARGE SCALE GENOMIC DNA]</scope>
</reference>
<reference key="3">
    <citation type="submission" date="2005-09" db="EMBL/GenBank/DDBJ databases">
        <authorList>
            <person name="Mural R.J."/>
            <person name="Istrail S."/>
            <person name="Sutton G.G."/>
            <person name="Florea L."/>
            <person name="Halpern A.L."/>
            <person name="Mobarry C.M."/>
            <person name="Lippert R."/>
            <person name="Walenz B."/>
            <person name="Shatkay H."/>
            <person name="Dew I."/>
            <person name="Miller J.R."/>
            <person name="Flanigan M.J."/>
            <person name="Edwards N.J."/>
            <person name="Bolanos R."/>
            <person name="Fasulo D."/>
            <person name="Halldorsson B.V."/>
            <person name="Hannenhalli S."/>
            <person name="Turner R."/>
            <person name="Yooseph S."/>
            <person name="Lu F."/>
            <person name="Nusskern D.R."/>
            <person name="Shue B.C."/>
            <person name="Zheng X.H."/>
            <person name="Zhong F."/>
            <person name="Delcher A.L."/>
            <person name="Huson D.H."/>
            <person name="Kravitz S.A."/>
            <person name="Mouchard L."/>
            <person name="Reinert K."/>
            <person name="Remington K.A."/>
            <person name="Clark A.G."/>
            <person name="Waterman M.S."/>
            <person name="Eichler E.E."/>
            <person name="Adams M.D."/>
            <person name="Hunkapiller M.W."/>
            <person name="Myers E.W."/>
            <person name="Venter J.C."/>
        </authorList>
    </citation>
    <scope>NUCLEOTIDE SEQUENCE [LARGE SCALE GENOMIC DNA]</scope>
</reference>
<reference key="4">
    <citation type="journal article" date="2004" name="Genome Res.">
        <title>The status, quality, and expansion of the NIH full-length cDNA project: the Mammalian Gene Collection (MGC).</title>
        <authorList>
            <consortium name="The MGC Project Team"/>
        </authorList>
    </citation>
    <scope>NUCLEOTIDE SEQUENCE [LARGE SCALE MRNA] (ISOFORM 1)</scope>
    <source>
        <tissue>Brain</tissue>
        <tissue>Eye</tissue>
    </source>
</reference>
<reference key="5">
    <citation type="journal article" date="2006" name="Cell">
        <title>Global, in vivo, and site-specific phosphorylation dynamics in signaling networks.</title>
        <authorList>
            <person name="Olsen J.V."/>
            <person name="Blagoev B."/>
            <person name="Gnad F."/>
            <person name="Macek B."/>
            <person name="Kumar C."/>
            <person name="Mortensen P."/>
            <person name="Mann M."/>
        </authorList>
    </citation>
    <scope>PHOSPHORYLATION [LARGE SCALE ANALYSIS] AT SER-203</scope>
    <scope>IDENTIFICATION BY MASS SPECTROMETRY [LARGE SCALE ANALYSIS]</scope>
    <source>
        <tissue>Cervix carcinoma</tissue>
    </source>
</reference>
<reference key="6">
    <citation type="journal article" date="2006" name="Nat. Biotechnol.">
        <title>A probability-based approach for high-throughput protein phosphorylation analysis and site localization.</title>
        <authorList>
            <person name="Beausoleil S.A."/>
            <person name="Villen J."/>
            <person name="Gerber S.A."/>
            <person name="Rush J."/>
            <person name="Gygi S.P."/>
        </authorList>
    </citation>
    <scope>IDENTIFICATION BY MASS SPECTROMETRY [LARGE SCALE ANALYSIS]</scope>
    <source>
        <tissue>Cervix carcinoma</tissue>
    </source>
</reference>
<reference key="7">
    <citation type="journal article" date="2007" name="Science">
        <title>ATM and ATR substrate analysis reveals extensive protein networks responsive to DNA damage.</title>
        <authorList>
            <person name="Matsuoka S."/>
            <person name="Ballif B.A."/>
            <person name="Smogorzewska A."/>
            <person name="McDonald E.R. III"/>
            <person name="Hurov K.E."/>
            <person name="Luo J."/>
            <person name="Bakalarski C.E."/>
            <person name="Zhao Z."/>
            <person name="Solimini N."/>
            <person name="Lerenthal Y."/>
            <person name="Shiloh Y."/>
            <person name="Gygi S.P."/>
            <person name="Elledge S.J."/>
        </authorList>
    </citation>
    <scope>IDENTIFICATION BY MASS SPECTROMETRY [LARGE SCALE ANALYSIS]</scope>
    <source>
        <tissue>Embryonic kidney</tissue>
    </source>
</reference>
<reference key="8">
    <citation type="journal article" date="2008" name="Mol. Cell">
        <title>Kinase-selective enrichment enables quantitative phosphoproteomics of the kinome across the cell cycle.</title>
        <authorList>
            <person name="Daub H."/>
            <person name="Olsen J.V."/>
            <person name="Bairlein M."/>
            <person name="Gnad F."/>
            <person name="Oppermann F.S."/>
            <person name="Korner R."/>
            <person name="Greff Z."/>
            <person name="Keri G."/>
            <person name="Stemmann O."/>
            <person name="Mann M."/>
        </authorList>
    </citation>
    <scope>IDENTIFICATION BY MASS SPECTROMETRY [LARGE SCALE ANALYSIS]</scope>
    <source>
        <tissue>Cervix carcinoma</tissue>
    </source>
</reference>
<reference key="9">
    <citation type="journal article" date="2008" name="Proc. Natl. Acad. Sci. U.S.A.">
        <title>A quantitative atlas of mitotic phosphorylation.</title>
        <authorList>
            <person name="Dephoure N."/>
            <person name="Zhou C."/>
            <person name="Villen J."/>
            <person name="Beausoleil S.A."/>
            <person name="Bakalarski C.E."/>
            <person name="Elledge S.J."/>
            <person name="Gygi S.P."/>
        </authorList>
    </citation>
    <scope>PHOSPHORYLATION [LARGE SCALE ANALYSIS] AT SER-203 AND SER-312</scope>
    <scope>IDENTIFICATION BY MASS SPECTROMETRY [LARGE SCALE ANALYSIS]</scope>
    <source>
        <tissue>Cervix carcinoma</tissue>
    </source>
</reference>
<reference key="10">
    <citation type="journal article" date="2008" name="Proteomics">
        <title>Large-scale phosphoproteome analysis of human liver tissue by enrichment and fractionation of phosphopeptides with strong anion exchange chromatography.</title>
        <authorList>
            <person name="Han G."/>
            <person name="Ye M."/>
            <person name="Zhou H."/>
            <person name="Jiang X."/>
            <person name="Feng S."/>
            <person name="Jiang X."/>
            <person name="Tian R."/>
            <person name="Wan D."/>
            <person name="Zou H."/>
            <person name="Gu J."/>
        </authorList>
    </citation>
    <scope>PHOSPHORYLATION [LARGE SCALE ANALYSIS] AT SER-203</scope>
    <scope>IDENTIFICATION BY MASS SPECTROMETRY [LARGE SCALE ANALYSIS]</scope>
    <source>
        <tissue>Liver</tissue>
    </source>
</reference>
<reference key="11">
    <citation type="journal article" date="2009" name="Anal. Chem.">
        <title>Lys-N and trypsin cover complementary parts of the phosphoproteome in a refined SCX-based approach.</title>
        <authorList>
            <person name="Gauci S."/>
            <person name="Helbig A.O."/>
            <person name="Slijper M."/>
            <person name="Krijgsveld J."/>
            <person name="Heck A.J."/>
            <person name="Mohammed S."/>
        </authorList>
    </citation>
    <scope>IDENTIFICATION BY MASS SPECTROMETRY [LARGE SCALE ANALYSIS]</scope>
</reference>
<reference key="12">
    <citation type="journal article" date="2009" name="Sci. Signal.">
        <title>Quantitative phosphoproteomic analysis of T cell receptor signaling reveals system-wide modulation of protein-protein interactions.</title>
        <authorList>
            <person name="Mayya V."/>
            <person name="Lundgren D.H."/>
            <person name="Hwang S.-I."/>
            <person name="Rezaul K."/>
            <person name="Wu L."/>
            <person name="Eng J.K."/>
            <person name="Rodionov V."/>
            <person name="Han D.K."/>
        </authorList>
    </citation>
    <scope>PHOSPHORYLATION [LARGE SCALE ANALYSIS] AT SER-203 AND SER-312</scope>
    <scope>IDENTIFICATION BY MASS SPECTROMETRY [LARGE SCALE ANALYSIS]</scope>
    <source>
        <tissue>Leukemic T-cell</tissue>
    </source>
</reference>
<reference key="13">
    <citation type="journal article" date="2010" name="Sci. Signal.">
        <title>Quantitative phosphoproteomics reveals widespread full phosphorylation site occupancy during mitosis.</title>
        <authorList>
            <person name="Olsen J.V."/>
            <person name="Vermeulen M."/>
            <person name="Santamaria A."/>
            <person name="Kumar C."/>
            <person name="Miller M.L."/>
            <person name="Jensen L.J."/>
            <person name="Gnad F."/>
            <person name="Cox J."/>
            <person name="Jensen T.S."/>
            <person name="Nigg E.A."/>
            <person name="Brunak S."/>
            <person name="Mann M."/>
        </authorList>
    </citation>
    <scope>PHOSPHORYLATION [LARGE SCALE ANALYSIS] AT SER-203 AND SER-312</scope>
    <scope>IDENTIFICATION BY MASS SPECTROMETRY [LARGE SCALE ANALYSIS]</scope>
    <source>
        <tissue>Cervix carcinoma</tissue>
    </source>
</reference>
<reference key="14">
    <citation type="journal article" date="2011" name="PLoS ONE">
        <title>Identification of a conserved anti-apoptotic protein that modulates the mitochondrial apoptosis pathway.</title>
        <authorList>
            <person name="Zhang Y."/>
            <person name="Johansson E."/>
            <person name="Miller M.L."/>
            <person name="Janicke R.U."/>
            <person name="Ferguson D.J."/>
            <person name="Plas D."/>
            <person name="Meller J."/>
            <person name="Anderson M.W."/>
        </authorList>
    </citation>
    <scope>FUNCTION</scope>
    <scope>TISSUE SPECIFICITY</scope>
</reference>
<reference key="15">
    <citation type="journal article" date="2011" name="Sci. Signal.">
        <title>System-wide temporal characterization of the proteome and phosphoproteome of human embryonic stem cell differentiation.</title>
        <authorList>
            <person name="Rigbolt K.T."/>
            <person name="Prokhorova T.A."/>
            <person name="Akimov V."/>
            <person name="Henningsen J."/>
            <person name="Johansen P.T."/>
            <person name="Kratchmarova I."/>
            <person name="Kassem M."/>
            <person name="Mann M."/>
            <person name="Olsen J.V."/>
            <person name="Blagoev B."/>
        </authorList>
    </citation>
    <scope>PHOSPHORYLATION [LARGE SCALE ANALYSIS] AT SER-203 AND SER-312</scope>
    <scope>IDENTIFICATION BY MASS SPECTROMETRY [LARGE SCALE ANALYSIS]</scope>
</reference>
<reference key="16">
    <citation type="journal article" date="2013" name="J. Proteome Res.">
        <title>Toward a comprehensive characterization of a human cancer cell phosphoproteome.</title>
        <authorList>
            <person name="Zhou H."/>
            <person name="Di Palma S."/>
            <person name="Preisinger C."/>
            <person name="Peng M."/>
            <person name="Polat A.N."/>
            <person name="Heck A.J."/>
            <person name="Mohammed S."/>
        </authorList>
    </citation>
    <scope>PHOSPHORYLATION [LARGE SCALE ANALYSIS] AT SER-89; THR-90; SER-203 AND SER-312</scope>
    <scope>IDENTIFICATION BY MASS SPECTROMETRY [LARGE SCALE ANALYSIS]</scope>
    <source>
        <tissue>Cervix carcinoma</tissue>
        <tissue>Erythroleukemia</tissue>
    </source>
</reference>
<reference key="17">
    <citation type="journal article" date="2014" name="J. Proteomics">
        <title>An enzyme assisted RP-RPLC approach for in-depth analysis of human liver phosphoproteome.</title>
        <authorList>
            <person name="Bian Y."/>
            <person name="Song C."/>
            <person name="Cheng K."/>
            <person name="Dong M."/>
            <person name="Wang F."/>
            <person name="Huang J."/>
            <person name="Sun D."/>
            <person name="Wang L."/>
            <person name="Ye M."/>
            <person name="Zou H."/>
        </authorList>
    </citation>
    <scope>PHOSPHORYLATION [LARGE SCALE ANALYSIS] AT SER-120; SER-203 AND SER-312</scope>
    <scope>IDENTIFICATION BY MASS SPECTROMETRY [LARGE SCALE ANALYSIS]</scope>
    <source>
        <tissue>Liver</tissue>
    </source>
</reference>
<reference key="18">
    <citation type="journal article" date="2017" name="Nat. Struct. Mol. Biol.">
        <title>Site-specific mapping of the human SUMO proteome reveals co-modification with phosphorylation.</title>
        <authorList>
            <person name="Hendriks I.A."/>
            <person name="Lyon D."/>
            <person name="Young C."/>
            <person name="Jensen L.J."/>
            <person name="Vertegaal A.C."/>
            <person name="Nielsen M.L."/>
        </authorList>
    </citation>
    <scope>SUMOYLATION [LARGE SCALE ANALYSIS] AT LYS-104</scope>
    <scope>IDENTIFICATION BY MASS SPECTROMETRY [LARGE SCALE ANALYSIS]</scope>
</reference>